<gene>
    <name evidence="1" type="primary">pheT</name>
    <name type="ordered locus">M28_Spy0567</name>
</gene>
<evidence type="ECO:0000255" key="1">
    <source>
        <dbReference type="HAMAP-Rule" id="MF_00283"/>
    </source>
</evidence>
<sequence>MGTKIMLVSYKWLKELVDIDVTPAALAEKMSATSIEVEGIEVPADGLSKLVVGHVLSCEDVPETHLHLCQVDTGDETPRQIVCGAPNVKAGIKVIVAVPGARIADNYKIKKGKIRGMESLGMICSLQELGLSDSIIPKEFSDGIQILPEEAVPGDAIFKYLDLDDHIIELSITPNRADALSMRGVAHEVAAIYGKSVSFPQKNLQESDKATSEAIEVAIASDNVLTYASRVVENVKVKPSPQWLQNLLMNAGIRPINNVVDVTNYVLLYFGQPMHAFDYDKFEDHKIVARAARQGESLVTLDGEKRDLTTEDLVITVADKPVALAGVMGGQATEIDANSQTVVLEVAVFDGKSIRKTSGRLNLRSESSSRFEKGVNYATVLEALDFAAAMLQELAEGQVLSGHVQAGQLPTEPVEVSTSLDYVNVRLGTELTFADIQRIFDQLGFGLTGDETSFTVAVPRRRWDVSIPADLVEEIARIYGYDKLPTTLPEAGGTAAELTPTQALRRKVRGLAEGLGLTEIISYALTTPEKAVEFAVAPSHLTELMWPMSVERSALRQNMVSGMLDTVAYNVARKQSNLALYEIGKIFEQEANPKEDLPNELNHFAFAICGLVAQKDFQTQAQAVDFYHAKGILDTLFANLNLKVQYVPTKDLASMHPGRTALILLDEQVIGFVGQVHPGTAKAYSIPETYVAELDMAALEAALPSDQTFAEITKFPAMTRDVALLLDREVSHQAIVTAIESAGVKRLTKIKLFDVYEGVTIQAGKKSMAYSLTFQNPNDNLTDEEVAKYMEKITKALTEQVGAEVR</sequence>
<protein>
    <recommendedName>
        <fullName evidence="1">Phenylalanine--tRNA ligase beta subunit</fullName>
        <ecNumber evidence="1">6.1.1.20</ecNumber>
    </recommendedName>
    <alternativeName>
        <fullName evidence="1">Phenylalanyl-tRNA synthetase beta subunit</fullName>
        <shortName evidence="1">PheRS</shortName>
    </alternativeName>
</protein>
<reference key="1">
    <citation type="journal article" date="2005" name="J. Infect. Dis.">
        <title>Genome sequence of a serotype M28 strain of group A Streptococcus: potential new insights into puerperal sepsis and bacterial disease specificity.</title>
        <authorList>
            <person name="Green N.M."/>
            <person name="Zhang S."/>
            <person name="Porcella S.F."/>
            <person name="Nagiec M.J."/>
            <person name="Barbian K.D."/>
            <person name="Beres S.B."/>
            <person name="Lefebvre R.B."/>
            <person name="Musser J.M."/>
        </authorList>
    </citation>
    <scope>NUCLEOTIDE SEQUENCE [LARGE SCALE GENOMIC DNA]</scope>
    <source>
        <strain>MGAS6180</strain>
    </source>
</reference>
<feature type="chain" id="PRO_0000232093" description="Phenylalanine--tRNA ligase beta subunit">
    <location>
        <begin position="1"/>
        <end position="806"/>
    </location>
</feature>
<feature type="domain" description="tRNA-binding" evidence="1">
    <location>
        <begin position="44"/>
        <end position="158"/>
    </location>
</feature>
<feature type="domain" description="B5" evidence="1">
    <location>
        <begin position="411"/>
        <end position="486"/>
    </location>
</feature>
<feature type="domain" description="FDX-ACB" evidence="1">
    <location>
        <begin position="713"/>
        <end position="806"/>
    </location>
</feature>
<feature type="binding site" evidence="1">
    <location>
        <position position="464"/>
    </location>
    <ligand>
        <name>Mg(2+)</name>
        <dbReference type="ChEBI" id="CHEBI:18420"/>
        <note>shared with alpha subunit</note>
    </ligand>
</feature>
<feature type="binding site" evidence="1">
    <location>
        <position position="470"/>
    </location>
    <ligand>
        <name>Mg(2+)</name>
        <dbReference type="ChEBI" id="CHEBI:18420"/>
        <note>shared with alpha subunit</note>
    </ligand>
</feature>
<feature type="binding site" evidence="1">
    <location>
        <position position="473"/>
    </location>
    <ligand>
        <name>Mg(2+)</name>
        <dbReference type="ChEBI" id="CHEBI:18420"/>
        <note>shared with alpha subunit</note>
    </ligand>
</feature>
<feature type="binding site" evidence="1">
    <location>
        <position position="474"/>
    </location>
    <ligand>
        <name>Mg(2+)</name>
        <dbReference type="ChEBI" id="CHEBI:18420"/>
        <note>shared with alpha subunit</note>
    </ligand>
</feature>
<dbReference type="EC" id="6.1.1.20" evidence="1"/>
<dbReference type="EMBL" id="CP000056">
    <property type="protein sequence ID" value="AAX71681.1"/>
    <property type="molecule type" value="Genomic_DNA"/>
</dbReference>
<dbReference type="RefSeq" id="WP_023079714.1">
    <property type="nucleotide sequence ID" value="NC_007296.2"/>
</dbReference>
<dbReference type="SMR" id="Q48UC5"/>
<dbReference type="KEGG" id="spb:M28_Spy0567"/>
<dbReference type="HOGENOM" id="CLU_016891_0_0_9"/>
<dbReference type="GO" id="GO:0009328">
    <property type="term" value="C:phenylalanine-tRNA ligase complex"/>
    <property type="evidence" value="ECO:0007669"/>
    <property type="project" value="TreeGrafter"/>
</dbReference>
<dbReference type="GO" id="GO:0005524">
    <property type="term" value="F:ATP binding"/>
    <property type="evidence" value="ECO:0007669"/>
    <property type="project" value="UniProtKB-UniRule"/>
</dbReference>
<dbReference type="GO" id="GO:0140096">
    <property type="term" value="F:catalytic activity, acting on a protein"/>
    <property type="evidence" value="ECO:0007669"/>
    <property type="project" value="UniProtKB-ARBA"/>
</dbReference>
<dbReference type="GO" id="GO:0000287">
    <property type="term" value="F:magnesium ion binding"/>
    <property type="evidence" value="ECO:0007669"/>
    <property type="project" value="UniProtKB-UniRule"/>
</dbReference>
<dbReference type="GO" id="GO:0004826">
    <property type="term" value="F:phenylalanine-tRNA ligase activity"/>
    <property type="evidence" value="ECO:0007669"/>
    <property type="project" value="UniProtKB-UniRule"/>
</dbReference>
<dbReference type="GO" id="GO:0016740">
    <property type="term" value="F:transferase activity"/>
    <property type="evidence" value="ECO:0007669"/>
    <property type="project" value="UniProtKB-ARBA"/>
</dbReference>
<dbReference type="GO" id="GO:0000049">
    <property type="term" value="F:tRNA binding"/>
    <property type="evidence" value="ECO:0007669"/>
    <property type="project" value="UniProtKB-KW"/>
</dbReference>
<dbReference type="GO" id="GO:0006432">
    <property type="term" value="P:phenylalanyl-tRNA aminoacylation"/>
    <property type="evidence" value="ECO:0007669"/>
    <property type="project" value="UniProtKB-UniRule"/>
</dbReference>
<dbReference type="CDD" id="cd00769">
    <property type="entry name" value="PheRS_beta_core"/>
    <property type="match status" value="1"/>
</dbReference>
<dbReference type="CDD" id="cd02796">
    <property type="entry name" value="tRNA_bind_bactPheRS"/>
    <property type="match status" value="1"/>
</dbReference>
<dbReference type="FunFam" id="2.40.50.140:FF:000045">
    <property type="entry name" value="Phenylalanine--tRNA ligase beta subunit"/>
    <property type="match status" value="1"/>
</dbReference>
<dbReference type="FunFam" id="3.30.70.380:FF:000001">
    <property type="entry name" value="Phenylalanine--tRNA ligase beta subunit"/>
    <property type="match status" value="1"/>
</dbReference>
<dbReference type="FunFam" id="3.30.930.10:FF:000022">
    <property type="entry name" value="Phenylalanine--tRNA ligase beta subunit"/>
    <property type="match status" value="1"/>
</dbReference>
<dbReference type="FunFam" id="3.50.40.10:FF:000001">
    <property type="entry name" value="Phenylalanine--tRNA ligase beta subunit"/>
    <property type="match status" value="1"/>
</dbReference>
<dbReference type="Gene3D" id="3.30.56.10">
    <property type="match status" value="2"/>
</dbReference>
<dbReference type="Gene3D" id="3.30.930.10">
    <property type="entry name" value="Bira Bifunctional Protein, Domain 2"/>
    <property type="match status" value="1"/>
</dbReference>
<dbReference type="Gene3D" id="3.30.70.380">
    <property type="entry name" value="Ferrodoxin-fold anticodon-binding domain"/>
    <property type="match status" value="1"/>
</dbReference>
<dbReference type="Gene3D" id="2.40.50.140">
    <property type="entry name" value="Nucleic acid-binding proteins"/>
    <property type="match status" value="1"/>
</dbReference>
<dbReference type="Gene3D" id="3.50.40.10">
    <property type="entry name" value="Phenylalanyl-trna Synthetase, Chain B, domain 3"/>
    <property type="match status" value="1"/>
</dbReference>
<dbReference type="HAMAP" id="MF_00283">
    <property type="entry name" value="Phe_tRNA_synth_beta1"/>
    <property type="match status" value="1"/>
</dbReference>
<dbReference type="InterPro" id="IPR045864">
    <property type="entry name" value="aa-tRNA-synth_II/BPL/LPL"/>
</dbReference>
<dbReference type="InterPro" id="IPR005146">
    <property type="entry name" value="B3/B4_tRNA-bd"/>
</dbReference>
<dbReference type="InterPro" id="IPR009061">
    <property type="entry name" value="DNA-bd_dom_put_sf"/>
</dbReference>
<dbReference type="InterPro" id="IPR005121">
    <property type="entry name" value="Fdx_antiC-bd"/>
</dbReference>
<dbReference type="InterPro" id="IPR036690">
    <property type="entry name" value="Fdx_antiC-bd_sf"/>
</dbReference>
<dbReference type="InterPro" id="IPR012340">
    <property type="entry name" value="NA-bd_OB-fold"/>
</dbReference>
<dbReference type="InterPro" id="IPR045060">
    <property type="entry name" value="Phe-tRNA-ligase_IIc_bsu"/>
</dbReference>
<dbReference type="InterPro" id="IPR004532">
    <property type="entry name" value="Phe-tRNA-ligase_IIc_bsu_bact"/>
</dbReference>
<dbReference type="InterPro" id="IPR020825">
    <property type="entry name" value="Phe-tRNA_synthase-like_B3/B4"/>
</dbReference>
<dbReference type="InterPro" id="IPR041616">
    <property type="entry name" value="PheRS_beta_core"/>
</dbReference>
<dbReference type="InterPro" id="IPR002547">
    <property type="entry name" value="tRNA-bd_dom"/>
</dbReference>
<dbReference type="InterPro" id="IPR033714">
    <property type="entry name" value="tRNA_bind_bactPheRS"/>
</dbReference>
<dbReference type="InterPro" id="IPR005147">
    <property type="entry name" value="tRNA_synthase_B5-dom"/>
</dbReference>
<dbReference type="NCBIfam" id="TIGR00472">
    <property type="entry name" value="pheT_bact"/>
    <property type="match status" value="1"/>
</dbReference>
<dbReference type="NCBIfam" id="NF045760">
    <property type="entry name" value="YtpR"/>
    <property type="match status" value="1"/>
</dbReference>
<dbReference type="PANTHER" id="PTHR10947:SF0">
    <property type="entry name" value="PHENYLALANINE--TRNA LIGASE BETA SUBUNIT"/>
    <property type="match status" value="1"/>
</dbReference>
<dbReference type="PANTHER" id="PTHR10947">
    <property type="entry name" value="PHENYLALANYL-TRNA SYNTHETASE BETA CHAIN AND LEUCINE-RICH REPEAT-CONTAINING PROTEIN 47"/>
    <property type="match status" value="1"/>
</dbReference>
<dbReference type="Pfam" id="PF03483">
    <property type="entry name" value="B3_4"/>
    <property type="match status" value="1"/>
</dbReference>
<dbReference type="Pfam" id="PF03484">
    <property type="entry name" value="B5"/>
    <property type="match status" value="1"/>
</dbReference>
<dbReference type="Pfam" id="PF03147">
    <property type="entry name" value="FDX-ACB"/>
    <property type="match status" value="1"/>
</dbReference>
<dbReference type="Pfam" id="PF01588">
    <property type="entry name" value="tRNA_bind"/>
    <property type="match status" value="1"/>
</dbReference>
<dbReference type="Pfam" id="PF17759">
    <property type="entry name" value="tRNA_synthFbeta"/>
    <property type="match status" value="1"/>
</dbReference>
<dbReference type="SMART" id="SM00873">
    <property type="entry name" value="B3_4"/>
    <property type="match status" value="1"/>
</dbReference>
<dbReference type="SMART" id="SM00874">
    <property type="entry name" value="B5"/>
    <property type="match status" value="1"/>
</dbReference>
<dbReference type="SMART" id="SM00896">
    <property type="entry name" value="FDX-ACB"/>
    <property type="match status" value="1"/>
</dbReference>
<dbReference type="SUPFAM" id="SSF54991">
    <property type="entry name" value="Anticodon-binding domain of PheRS"/>
    <property type="match status" value="1"/>
</dbReference>
<dbReference type="SUPFAM" id="SSF55681">
    <property type="entry name" value="Class II aaRS and biotin synthetases"/>
    <property type="match status" value="1"/>
</dbReference>
<dbReference type="SUPFAM" id="SSF50249">
    <property type="entry name" value="Nucleic acid-binding proteins"/>
    <property type="match status" value="1"/>
</dbReference>
<dbReference type="SUPFAM" id="SSF56037">
    <property type="entry name" value="PheT/TilS domain"/>
    <property type="match status" value="1"/>
</dbReference>
<dbReference type="SUPFAM" id="SSF46955">
    <property type="entry name" value="Putative DNA-binding domain"/>
    <property type="match status" value="1"/>
</dbReference>
<dbReference type="PROSITE" id="PS51483">
    <property type="entry name" value="B5"/>
    <property type="match status" value="1"/>
</dbReference>
<dbReference type="PROSITE" id="PS51447">
    <property type="entry name" value="FDX_ACB"/>
    <property type="match status" value="1"/>
</dbReference>
<dbReference type="PROSITE" id="PS50886">
    <property type="entry name" value="TRBD"/>
    <property type="match status" value="1"/>
</dbReference>
<proteinExistence type="inferred from homology"/>
<accession>Q48UC5</accession>
<organism>
    <name type="scientific">Streptococcus pyogenes serotype M28 (strain MGAS6180)</name>
    <dbReference type="NCBI Taxonomy" id="319701"/>
    <lineage>
        <taxon>Bacteria</taxon>
        <taxon>Bacillati</taxon>
        <taxon>Bacillota</taxon>
        <taxon>Bacilli</taxon>
        <taxon>Lactobacillales</taxon>
        <taxon>Streptococcaceae</taxon>
        <taxon>Streptococcus</taxon>
    </lineage>
</organism>
<keyword id="KW-0030">Aminoacyl-tRNA synthetase</keyword>
<keyword id="KW-0067">ATP-binding</keyword>
<keyword id="KW-0963">Cytoplasm</keyword>
<keyword id="KW-0436">Ligase</keyword>
<keyword id="KW-0460">Magnesium</keyword>
<keyword id="KW-0479">Metal-binding</keyword>
<keyword id="KW-0547">Nucleotide-binding</keyword>
<keyword id="KW-0648">Protein biosynthesis</keyword>
<keyword id="KW-0694">RNA-binding</keyword>
<keyword id="KW-0820">tRNA-binding</keyword>
<name>SYFB_STRPM</name>
<comment type="catalytic activity">
    <reaction evidence="1">
        <text>tRNA(Phe) + L-phenylalanine + ATP = L-phenylalanyl-tRNA(Phe) + AMP + diphosphate + H(+)</text>
        <dbReference type="Rhea" id="RHEA:19413"/>
        <dbReference type="Rhea" id="RHEA-COMP:9668"/>
        <dbReference type="Rhea" id="RHEA-COMP:9699"/>
        <dbReference type="ChEBI" id="CHEBI:15378"/>
        <dbReference type="ChEBI" id="CHEBI:30616"/>
        <dbReference type="ChEBI" id="CHEBI:33019"/>
        <dbReference type="ChEBI" id="CHEBI:58095"/>
        <dbReference type="ChEBI" id="CHEBI:78442"/>
        <dbReference type="ChEBI" id="CHEBI:78531"/>
        <dbReference type="ChEBI" id="CHEBI:456215"/>
        <dbReference type="EC" id="6.1.1.20"/>
    </reaction>
</comment>
<comment type="cofactor">
    <cofactor evidence="1">
        <name>Mg(2+)</name>
        <dbReference type="ChEBI" id="CHEBI:18420"/>
    </cofactor>
    <text evidence="1">Binds 2 magnesium ions per tetramer.</text>
</comment>
<comment type="subunit">
    <text evidence="1">Tetramer of two alpha and two beta subunits.</text>
</comment>
<comment type="subcellular location">
    <subcellularLocation>
        <location>Cytoplasm</location>
    </subcellularLocation>
</comment>
<comment type="similarity">
    <text evidence="1">Belongs to the phenylalanyl-tRNA synthetase beta subunit family. Type 1 subfamily.</text>
</comment>